<name>SYT_THEP1</name>
<feature type="chain" id="PRO_1000020544" description="Threonine--tRNA ligase">
    <location>
        <begin position="1"/>
        <end position="640"/>
    </location>
</feature>
<feature type="domain" description="TGS" evidence="2">
    <location>
        <begin position="1"/>
        <end position="59"/>
    </location>
</feature>
<feature type="region of interest" description="Catalytic" evidence="1">
    <location>
        <begin position="240"/>
        <end position="531"/>
    </location>
</feature>
<feature type="binding site" evidence="1">
    <location>
        <position position="332"/>
    </location>
    <ligand>
        <name>Zn(2+)</name>
        <dbReference type="ChEBI" id="CHEBI:29105"/>
    </ligand>
</feature>
<feature type="binding site" evidence="1">
    <location>
        <position position="383"/>
    </location>
    <ligand>
        <name>Zn(2+)</name>
        <dbReference type="ChEBI" id="CHEBI:29105"/>
    </ligand>
</feature>
<feature type="binding site" evidence="1">
    <location>
        <position position="508"/>
    </location>
    <ligand>
        <name>Zn(2+)</name>
        <dbReference type="ChEBI" id="CHEBI:29105"/>
    </ligand>
</feature>
<reference key="1">
    <citation type="submission" date="2007-05" db="EMBL/GenBank/DDBJ databases">
        <title>Complete sequence of Thermotoga petrophila RKU-1.</title>
        <authorList>
            <consortium name="US DOE Joint Genome Institute"/>
            <person name="Copeland A."/>
            <person name="Lucas S."/>
            <person name="Lapidus A."/>
            <person name="Barry K."/>
            <person name="Glavina del Rio T."/>
            <person name="Dalin E."/>
            <person name="Tice H."/>
            <person name="Pitluck S."/>
            <person name="Sims D."/>
            <person name="Brettin T."/>
            <person name="Bruce D."/>
            <person name="Detter J.C."/>
            <person name="Han C."/>
            <person name="Tapia R."/>
            <person name="Schmutz J."/>
            <person name="Larimer F."/>
            <person name="Land M."/>
            <person name="Hauser L."/>
            <person name="Kyrpides N."/>
            <person name="Mikhailova N."/>
            <person name="Nelson K."/>
            <person name="Gogarten J.P."/>
            <person name="Noll K."/>
            <person name="Richardson P."/>
        </authorList>
    </citation>
    <scope>NUCLEOTIDE SEQUENCE [LARGE SCALE GENOMIC DNA]</scope>
    <source>
        <strain>ATCC BAA-488 / DSM 13995 / JCM 10881 / RKU-1</strain>
    </source>
</reference>
<accession>A5IJ45</accession>
<organism>
    <name type="scientific">Thermotoga petrophila (strain ATCC BAA-488 / DSM 13995 / JCM 10881 / RKU-1)</name>
    <dbReference type="NCBI Taxonomy" id="390874"/>
    <lineage>
        <taxon>Bacteria</taxon>
        <taxon>Thermotogati</taxon>
        <taxon>Thermotogota</taxon>
        <taxon>Thermotogae</taxon>
        <taxon>Thermotogales</taxon>
        <taxon>Thermotogaceae</taxon>
        <taxon>Thermotoga</taxon>
    </lineage>
</organism>
<gene>
    <name evidence="1" type="primary">thrS</name>
    <name type="ordered locus">Tpet_0189</name>
</gene>
<evidence type="ECO:0000255" key="1">
    <source>
        <dbReference type="HAMAP-Rule" id="MF_00184"/>
    </source>
</evidence>
<evidence type="ECO:0000255" key="2">
    <source>
        <dbReference type="PROSITE-ProRule" id="PRU01228"/>
    </source>
</evidence>
<dbReference type="EC" id="6.1.1.3" evidence="1"/>
<dbReference type="EMBL" id="CP000702">
    <property type="protein sequence ID" value="ABQ46218.1"/>
    <property type="molecule type" value="Genomic_DNA"/>
</dbReference>
<dbReference type="RefSeq" id="WP_011942872.1">
    <property type="nucleotide sequence ID" value="NC_009486.1"/>
</dbReference>
<dbReference type="SMR" id="A5IJ45"/>
<dbReference type="STRING" id="390874.Tpet_0189"/>
<dbReference type="KEGG" id="tpt:Tpet_0189"/>
<dbReference type="eggNOG" id="COG0441">
    <property type="taxonomic scope" value="Bacteria"/>
</dbReference>
<dbReference type="HOGENOM" id="CLU_008554_0_1_0"/>
<dbReference type="Proteomes" id="UP000006558">
    <property type="component" value="Chromosome"/>
</dbReference>
<dbReference type="GO" id="GO:0005737">
    <property type="term" value="C:cytoplasm"/>
    <property type="evidence" value="ECO:0007669"/>
    <property type="project" value="UniProtKB-SubCell"/>
</dbReference>
<dbReference type="GO" id="GO:0005524">
    <property type="term" value="F:ATP binding"/>
    <property type="evidence" value="ECO:0007669"/>
    <property type="project" value="UniProtKB-UniRule"/>
</dbReference>
<dbReference type="GO" id="GO:0046872">
    <property type="term" value="F:metal ion binding"/>
    <property type="evidence" value="ECO:0007669"/>
    <property type="project" value="UniProtKB-KW"/>
</dbReference>
<dbReference type="GO" id="GO:0004829">
    <property type="term" value="F:threonine-tRNA ligase activity"/>
    <property type="evidence" value="ECO:0007669"/>
    <property type="project" value="UniProtKB-UniRule"/>
</dbReference>
<dbReference type="GO" id="GO:0000049">
    <property type="term" value="F:tRNA binding"/>
    <property type="evidence" value="ECO:0007669"/>
    <property type="project" value="UniProtKB-KW"/>
</dbReference>
<dbReference type="GO" id="GO:0006435">
    <property type="term" value="P:threonyl-tRNA aminoacylation"/>
    <property type="evidence" value="ECO:0007669"/>
    <property type="project" value="UniProtKB-UniRule"/>
</dbReference>
<dbReference type="CDD" id="cd01667">
    <property type="entry name" value="TGS_ThrRS"/>
    <property type="match status" value="1"/>
</dbReference>
<dbReference type="CDD" id="cd00860">
    <property type="entry name" value="ThrRS_anticodon"/>
    <property type="match status" value="1"/>
</dbReference>
<dbReference type="CDD" id="cd00771">
    <property type="entry name" value="ThrRS_core"/>
    <property type="match status" value="1"/>
</dbReference>
<dbReference type="FunFam" id="3.30.54.20:FF:000002">
    <property type="entry name" value="Threonine--tRNA ligase"/>
    <property type="match status" value="1"/>
</dbReference>
<dbReference type="FunFam" id="3.30.930.10:FF:000002">
    <property type="entry name" value="Threonine--tRNA ligase"/>
    <property type="match status" value="1"/>
</dbReference>
<dbReference type="FunFam" id="3.40.50.800:FF:000001">
    <property type="entry name" value="Threonine--tRNA ligase"/>
    <property type="match status" value="1"/>
</dbReference>
<dbReference type="FunFam" id="3.30.980.10:FF:000005">
    <property type="entry name" value="Threonyl-tRNA synthetase, mitochondrial"/>
    <property type="match status" value="1"/>
</dbReference>
<dbReference type="Gene3D" id="3.10.20.30">
    <property type="match status" value="1"/>
</dbReference>
<dbReference type="Gene3D" id="3.40.50.800">
    <property type="entry name" value="Anticodon-binding domain"/>
    <property type="match status" value="1"/>
</dbReference>
<dbReference type="Gene3D" id="3.30.930.10">
    <property type="entry name" value="Bira Bifunctional Protein, Domain 2"/>
    <property type="match status" value="1"/>
</dbReference>
<dbReference type="Gene3D" id="3.30.980.10">
    <property type="entry name" value="Threonyl-trna Synthetase, Chain A, domain 2"/>
    <property type="match status" value="1"/>
</dbReference>
<dbReference type="HAMAP" id="MF_00184">
    <property type="entry name" value="Thr_tRNA_synth"/>
    <property type="match status" value="1"/>
</dbReference>
<dbReference type="InterPro" id="IPR002314">
    <property type="entry name" value="aa-tRNA-synt_IIb"/>
</dbReference>
<dbReference type="InterPro" id="IPR006195">
    <property type="entry name" value="aa-tRNA-synth_II"/>
</dbReference>
<dbReference type="InterPro" id="IPR045864">
    <property type="entry name" value="aa-tRNA-synth_II/BPL/LPL"/>
</dbReference>
<dbReference type="InterPro" id="IPR004154">
    <property type="entry name" value="Anticodon-bd"/>
</dbReference>
<dbReference type="InterPro" id="IPR036621">
    <property type="entry name" value="Anticodon-bd_dom_sf"/>
</dbReference>
<dbReference type="InterPro" id="IPR012675">
    <property type="entry name" value="Beta-grasp_dom_sf"/>
</dbReference>
<dbReference type="InterPro" id="IPR004095">
    <property type="entry name" value="TGS"/>
</dbReference>
<dbReference type="InterPro" id="IPR012676">
    <property type="entry name" value="TGS-like"/>
</dbReference>
<dbReference type="InterPro" id="IPR002320">
    <property type="entry name" value="Thr-tRNA-ligase_IIa"/>
</dbReference>
<dbReference type="InterPro" id="IPR018163">
    <property type="entry name" value="Thr/Ala-tRNA-synth_IIc_edit"/>
</dbReference>
<dbReference type="InterPro" id="IPR047246">
    <property type="entry name" value="ThrRS_anticodon"/>
</dbReference>
<dbReference type="InterPro" id="IPR033728">
    <property type="entry name" value="ThrRS_core"/>
</dbReference>
<dbReference type="InterPro" id="IPR012947">
    <property type="entry name" value="tRNA_SAD"/>
</dbReference>
<dbReference type="NCBIfam" id="TIGR00418">
    <property type="entry name" value="thrS"/>
    <property type="match status" value="1"/>
</dbReference>
<dbReference type="PANTHER" id="PTHR11451:SF44">
    <property type="entry name" value="THREONINE--TRNA LIGASE, CHLOROPLASTIC_MITOCHONDRIAL 2"/>
    <property type="match status" value="1"/>
</dbReference>
<dbReference type="PANTHER" id="PTHR11451">
    <property type="entry name" value="THREONINE-TRNA LIGASE"/>
    <property type="match status" value="1"/>
</dbReference>
<dbReference type="Pfam" id="PF03129">
    <property type="entry name" value="HGTP_anticodon"/>
    <property type="match status" value="1"/>
</dbReference>
<dbReference type="Pfam" id="PF02824">
    <property type="entry name" value="TGS"/>
    <property type="match status" value="1"/>
</dbReference>
<dbReference type="Pfam" id="PF00587">
    <property type="entry name" value="tRNA-synt_2b"/>
    <property type="match status" value="1"/>
</dbReference>
<dbReference type="Pfam" id="PF07973">
    <property type="entry name" value="tRNA_SAD"/>
    <property type="match status" value="1"/>
</dbReference>
<dbReference type="PRINTS" id="PR01047">
    <property type="entry name" value="TRNASYNTHTHR"/>
</dbReference>
<dbReference type="SMART" id="SM00863">
    <property type="entry name" value="tRNA_SAD"/>
    <property type="match status" value="1"/>
</dbReference>
<dbReference type="SUPFAM" id="SSF52954">
    <property type="entry name" value="Class II aaRS ABD-related"/>
    <property type="match status" value="1"/>
</dbReference>
<dbReference type="SUPFAM" id="SSF55681">
    <property type="entry name" value="Class II aaRS and biotin synthetases"/>
    <property type="match status" value="1"/>
</dbReference>
<dbReference type="SUPFAM" id="SSF81271">
    <property type="entry name" value="TGS-like"/>
    <property type="match status" value="1"/>
</dbReference>
<dbReference type="SUPFAM" id="SSF55186">
    <property type="entry name" value="ThrRS/AlaRS common domain"/>
    <property type="match status" value="1"/>
</dbReference>
<dbReference type="PROSITE" id="PS50862">
    <property type="entry name" value="AA_TRNA_LIGASE_II"/>
    <property type="match status" value="1"/>
</dbReference>
<dbReference type="PROSITE" id="PS51880">
    <property type="entry name" value="TGS"/>
    <property type="match status" value="1"/>
</dbReference>
<sequence length="640" mass="74498">MKIKVKLPDGKEKEYDRGITPAEIAKELGVKKAIGAVVNGELWDLKRPIENDCELRLVTLEDPEAPEFYRHTMAHILAQAVMRIYGKENVKLGIGPTIENGFYYDFDIKNGKLTEEDLPKIEQEMKKIIKENLPIERKEISKEEARKLFNNQPYKLELIEEIEGDRVTIYRQGEFVDLCRGPHLPSTGVVKHFKLLSVSGAYWRGSEKNPMLTRVYGTAFAKKEDLDNYLKFLEEAQRRDHRKLGPHLELFMLNTEYAPGMPFFLPKGVVVLNELMRFSRELHRERGYQEIFTPLIMNEQLWKISGHWDHYAENMYFIEKDEERYAVKPMNCPGHILVYKSRTVSYRDLPLRFFEFGRVHRYERSGVLHGLMRVRSFTQDDAHIFCTPDQIEEEILGVLDLINTIYGQFGFTYRVELSTMPEDHMGDEAIWEKATTALKNALERAGLSYKVNEGEGAFYGPKIDFHIRDSIGREWQCATIQLDFMMPEKFNVTYIGPDNKEHRAVMIHRAIYGSLERFFGILIEHFAGAFPTWLAPIQVAVIPISEKHNDGAEKIAKRISQEGFRVFFDNRRETLGYRIRQAQTQKIPYMIILGDKELESGKISVRTRTGKEIKDVDLEHFVETLRNEVLSRKLELLMEG</sequence>
<protein>
    <recommendedName>
        <fullName evidence="1">Threonine--tRNA ligase</fullName>
        <ecNumber evidence="1">6.1.1.3</ecNumber>
    </recommendedName>
    <alternativeName>
        <fullName evidence="1">Threonyl-tRNA synthetase</fullName>
        <shortName evidence="1">ThrRS</shortName>
    </alternativeName>
</protein>
<proteinExistence type="inferred from homology"/>
<keyword id="KW-0030">Aminoacyl-tRNA synthetase</keyword>
<keyword id="KW-0067">ATP-binding</keyword>
<keyword id="KW-0963">Cytoplasm</keyword>
<keyword id="KW-0436">Ligase</keyword>
<keyword id="KW-0479">Metal-binding</keyword>
<keyword id="KW-0547">Nucleotide-binding</keyword>
<keyword id="KW-0648">Protein biosynthesis</keyword>
<keyword id="KW-0694">RNA-binding</keyword>
<keyword id="KW-0820">tRNA-binding</keyword>
<keyword id="KW-0862">Zinc</keyword>
<comment type="function">
    <text evidence="1">Catalyzes the attachment of threonine to tRNA(Thr) in a two-step reaction: L-threonine is first activated by ATP to form Thr-AMP and then transferred to the acceptor end of tRNA(Thr). Also edits incorrectly charged L-seryl-tRNA(Thr).</text>
</comment>
<comment type="catalytic activity">
    <reaction evidence="1">
        <text>tRNA(Thr) + L-threonine + ATP = L-threonyl-tRNA(Thr) + AMP + diphosphate + H(+)</text>
        <dbReference type="Rhea" id="RHEA:24624"/>
        <dbReference type="Rhea" id="RHEA-COMP:9670"/>
        <dbReference type="Rhea" id="RHEA-COMP:9704"/>
        <dbReference type="ChEBI" id="CHEBI:15378"/>
        <dbReference type="ChEBI" id="CHEBI:30616"/>
        <dbReference type="ChEBI" id="CHEBI:33019"/>
        <dbReference type="ChEBI" id="CHEBI:57926"/>
        <dbReference type="ChEBI" id="CHEBI:78442"/>
        <dbReference type="ChEBI" id="CHEBI:78534"/>
        <dbReference type="ChEBI" id="CHEBI:456215"/>
        <dbReference type="EC" id="6.1.1.3"/>
    </reaction>
</comment>
<comment type="cofactor">
    <cofactor evidence="1">
        <name>Zn(2+)</name>
        <dbReference type="ChEBI" id="CHEBI:29105"/>
    </cofactor>
    <text evidence="1">Binds 1 zinc ion per subunit.</text>
</comment>
<comment type="subunit">
    <text evidence="1">Homodimer.</text>
</comment>
<comment type="subcellular location">
    <subcellularLocation>
        <location evidence="1">Cytoplasm</location>
    </subcellularLocation>
</comment>
<comment type="similarity">
    <text evidence="1">Belongs to the class-II aminoacyl-tRNA synthetase family.</text>
</comment>